<proteinExistence type="inferred from homology"/>
<name>HIS7_NITEC</name>
<comment type="catalytic activity">
    <reaction evidence="1">
        <text>D-erythro-1-(imidazol-4-yl)glycerol 3-phosphate = 3-(imidazol-4-yl)-2-oxopropyl phosphate + H2O</text>
        <dbReference type="Rhea" id="RHEA:11040"/>
        <dbReference type="ChEBI" id="CHEBI:15377"/>
        <dbReference type="ChEBI" id="CHEBI:57766"/>
        <dbReference type="ChEBI" id="CHEBI:58278"/>
        <dbReference type="EC" id="4.2.1.19"/>
    </reaction>
</comment>
<comment type="pathway">
    <text evidence="1">Amino-acid biosynthesis; L-histidine biosynthesis; L-histidine from 5-phospho-alpha-D-ribose 1-diphosphate: step 6/9.</text>
</comment>
<comment type="subcellular location">
    <subcellularLocation>
        <location evidence="1">Cytoplasm</location>
    </subcellularLocation>
</comment>
<comment type="similarity">
    <text evidence="1">Belongs to the imidazoleglycerol-phosphate dehydratase family.</text>
</comment>
<gene>
    <name evidence="1" type="primary">hisB</name>
    <name type="ordered locus">Neut_1906</name>
</gene>
<feature type="chain" id="PRO_1000010309" description="Imidazoleglycerol-phosphate dehydratase">
    <location>
        <begin position="1"/>
        <end position="195"/>
    </location>
</feature>
<sequence length="195" mass="21424">MRKAQVTRNTQETQITVAINLDGQGKAELDSGVPFLDHMLDQIARHGMIDLNVAAKGDLHIDAHHTVEDIGIALGQALNRAIGDKKGIFRYGHAYVPLDETLSRVVIDLSGRPGLQFNTTFTRAVIGSFDVDLIQEFFQGFVNHAMMTLHIDNLAGKNAHHQAESIFKAFGRALRMAVTIDPRCDDLIPSTKGVL</sequence>
<reference key="1">
    <citation type="journal article" date="2007" name="Environ. Microbiol.">
        <title>Whole-genome analysis of the ammonia-oxidizing bacterium, Nitrosomonas eutropha C91: implications for niche adaptation.</title>
        <authorList>
            <person name="Stein L.Y."/>
            <person name="Arp D.J."/>
            <person name="Berube P.M."/>
            <person name="Chain P.S."/>
            <person name="Hauser L."/>
            <person name="Jetten M.S."/>
            <person name="Klotz M.G."/>
            <person name="Larimer F.W."/>
            <person name="Norton J.M."/>
            <person name="Op den Camp H.J.M."/>
            <person name="Shin M."/>
            <person name="Wei X."/>
        </authorList>
    </citation>
    <scope>NUCLEOTIDE SEQUENCE [LARGE SCALE GENOMIC DNA]</scope>
    <source>
        <strain>DSM 101675 / C91 / Nm57</strain>
    </source>
</reference>
<dbReference type="EC" id="4.2.1.19" evidence="1"/>
<dbReference type="EMBL" id="CP000450">
    <property type="protein sequence ID" value="ABI60138.1"/>
    <property type="molecule type" value="Genomic_DNA"/>
</dbReference>
<dbReference type="RefSeq" id="WP_011634940.1">
    <property type="nucleotide sequence ID" value="NC_008344.1"/>
</dbReference>
<dbReference type="SMR" id="Q0AEU4"/>
<dbReference type="STRING" id="335283.Neut_1906"/>
<dbReference type="KEGG" id="net:Neut_1906"/>
<dbReference type="eggNOG" id="COG0131">
    <property type="taxonomic scope" value="Bacteria"/>
</dbReference>
<dbReference type="HOGENOM" id="CLU_044308_2_0_4"/>
<dbReference type="OrthoDB" id="9790411at2"/>
<dbReference type="UniPathway" id="UPA00031">
    <property type="reaction ID" value="UER00011"/>
</dbReference>
<dbReference type="Proteomes" id="UP000001966">
    <property type="component" value="Chromosome"/>
</dbReference>
<dbReference type="GO" id="GO:0005737">
    <property type="term" value="C:cytoplasm"/>
    <property type="evidence" value="ECO:0007669"/>
    <property type="project" value="UniProtKB-SubCell"/>
</dbReference>
<dbReference type="GO" id="GO:0004424">
    <property type="term" value="F:imidazoleglycerol-phosphate dehydratase activity"/>
    <property type="evidence" value="ECO:0007669"/>
    <property type="project" value="UniProtKB-UniRule"/>
</dbReference>
<dbReference type="GO" id="GO:0000105">
    <property type="term" value="P:L-histidine biosynthetic process"/>
    <property type="evidence" value="ECO:0007669"/>
    <property type="project" value="UniProtKB-UniRule"/>
</dbReference>
<dbReference type="CDD" id="cd07914">
    <property type="entry name" value="IGPD"/>
    <property type="match status" value="1"/>
</dbReference>
<dbReference type="FunFam" id="3.30.230.40:FF:000001">
    <property type="entry name" value="Imidazoleglycerol-phosphate dehydratase HisB"/>
    <property type="match status" value="1"/>
</dbReference>
<dbReference type="FunFam" id="3.30.230.40:FF:000003">
    <property type="entry name" value="Imidazoleglycerol-phosphate dehydratase HisB"/>
    <property type="match status" value="1"/>
</dbReference>
<dbReference type="Gene3D" id="3.30.230.40">
    <property type="entry name" value="Imidazole glycerol phosphate dehydratase, domain 1"/>
    <property type="match status" value="2"/>
</dbReference>
<dbReference type="HAMAP" id="MF_00076">
    <property type="entry name" value="HisB"/>
    <property type="match status" value="1"/>
</dbReference>
<dbReference type="InterPro" id="IPR038494">
    <property type="entry name" value="IGPD_sf"/>
</dbReference>
<dbReference type="InterPro" id="IPR000807">
    <property type="entry name" value="ImidazoleglycerolP_deHydtase"/>
</dbReference>
<dbReference type="InterPro" id="IPR020565">
    <property type="entry name" value="ImidazoleglycerP_deHydtase_CS"/>
</dbReference>
<dbReference type="InterPro" id="IPR020568">
    <property type="entry name" value="Ribosomal_Su5_D2-typ_SF"/>
</dbReference>
<dbReference type="NCBIfam" id="NF002106">
    <property type="entry name" value="PRK00951.1-1"/>
    <property type="match status" value="1"/>
</dbReference>
<dbReference type="NCBIfam" id="NF002109">
    <property type="entry name" value="PRK00951.1-5"/>
    <property type="match status" value="1"/>
</dbReference>
<dbReference type="NCBIfam" id="NF002111">
    <property type="entry name" value="PRK00951.2-1"/>
    <property type="match status" value="1"/>
</dbReference>
<dbReference type="NCBIfam" id="NF002114">
    <property type="entry name" value="PRK00951.2-4"/>
    <property type="match status" value="1"/>
</dbReference>
<dbReference type="PANTHER" id="PTHR23133:SF2">
    <property type="entry name" value="IMIDAZOLEGLYCEROL-PHOSPHATE DEHYDRATASE"/>
    <property type="match status" value="1"/>
</dbReference>
<dbReference type="PANTHER" id="PTHR23133">
    <property type="entry name" value="IMIDAZOLEGLYCEROL-PHOSPHATE DEHYDRATASE HIS7"/>
    <property type="match status" value="1"/>
</dbReference>
<dbReference type="Pfam" id="PF00475">
    <property type="entry name" value="IGPD"/>
    <property type="match status" value="1"/>
</dbReference>
<dbReference type="SUPFAM" id="SSF54211">
    <property type="entry name" value="Ribosomal protein S5 domain 2-like"/>
    <property type="match status" value="2"/>
</dbReference>
<dbReference type="PROSITE" id="PS00954">
    <property type="entry name" value="IGP_DEHYDRATASE_1"/>
    <property type="match status" value="1"/>
</dbReference>
<dbReference type="PROSITE" id="PS00955">
    <property type="entry name" value="IGP_DEHYDRATASE_2"/>
    <property type="match status" value="1"/>
</dbReference>
<organism>
    <name type="scientific">Nitrosomonas eutropha (strain DSM 101675 / C91 / Nm57)</name>
    <dbReference type="NCBI Taxonomy" id="335283"/>
    <lineage>
        <taxon>Bacteria</taxon>
        <taxon>Pseudomonadati</taxon>
        <taxon>Pseudomonadota</taxon>
        <taxon>Betaproteobacteria</taxon>
        <taxon>Nitrosomonadales</taxon>
        <taxon>Nitrosomonadaceae</taxon>
        <taxon>Nitrosomonas</taxon>
    </lineage>
</organism>
<accession>Q0AEU4</accession>
<protein>
    <recommendedName>
        <fullName evidence="1">Imidazoleglycerol-phosphate dehydratase</fullName>
        <shortName evidence="1">IGPD</shortName>
        <ecNumber evidence="1">4.2.1.19</ecNumber>
    </recommendedName>
</protein>
<evidence type="ECO:0000255" key="1">
    <source>
        <dbReference type="HAMAP-Rule" id="MF_00076"/>
    </source>
</evidence>
<keyword id="KW-0028">Amino-acid biosynthesis</keyword>
<keyword id="KW-0963">Cytoplasm</keyword>
<keyword id="KW-0368">Histidine biosynthesis</keyword>
<keyword id="KW-0456">Lyase</keyword>